<name>ACDH5_RHOJR</name>
<organism>
    <name type="scientific">Rhodococcus jostii (strain RHA1)</name>
    <dbReference type="NCBI Taxonomy" id="101510"/>
    <lineage>
        <taxon>Bacteria</taxon>
        <taxon>Bacillati</taxon>
        <taxon>Actinomycetota</taxon>
        <taxon>Actinomycetes</taxon>
        <taxon>Mycobacteriales</taxon>
        <taxon>Nocardiaceae</taxon>
        <taxon>Rhodococcus</taxon>
    </lineage>
</organism>
<feature type="chain" id="PRO_0000387730" description="Acetaldehyde dehydrogenase 5">
    <location>
        <begin position="1"/>
        <end position="327"/>
    </location>
</feature>
<feature type="active site" description="Acyl-thioester intermediate" evidence="1">
    <location>
        <position position="133"/>
    </location>
</feature>
<feature type="binding site" evidence="1">
    <location>
        <begin position="15"/>
        <end position="18"/>
    </location>
    <ligand>
        <name>NAD(+)</name>
        <dbReference type="ChEBI" id="CHEBI:57540"/>
    </ligand>
</feature>
<feature type="binding site" evidence="1">
    <location>
        <begin position="164"/>
        <end position="172"/>
    </location>
    <ligand>
        <name>NAD(+)</name>
        <dbReference type="ChEBI" id="CHEBI:57540"/>
    </ligand>
</feature>
<feature type="binding site" evidence="1">
    <location>
        <position position="297"/>
    </location>
    <ligand>
        <name>NAD(+)</name>
        <dbReference type="ChEBI" id="CHEBI:57540"/>
    </ligand>
</feature>
<comment type="catalytic activity">
    <reaction evidence="1">
        <text>acetaldehyde + NAD(+) + CoA = acetyl-CoA + NADH + H(+)</text>
        <dbReference type="Rhea" id="RHEA:23288"/>
        <dbReference type="ChEBI" id="CHEBI:15343"/>
        <dbReference type="ChEBI" id="CHEBI:15378"/>
        <dbReference type="ChEBI" id="CHEBI:57287"/>
        <dbReference type="ChEBI" id="CHEBI:57288"/>
        <dbReference type="ChEBI" id="CHEBI:57540"/>
        <dbReference type="ChEBI" id="CHEBI:57945"/>
        <dbReference type="EC" id="1.2.1.10"/>
    </reaction>
</comment>
<comment type="similarity">
    <text evidence="1">Belongs to the acetaldehyde dehydrogenase family.</text>
</comment>
<evidence type="ECO:0000255" key="1">
    <source>
        <dbReference type="HAMAP-Rule" id="MF_01657"/>
    </source>
</evidence>
<reference key="1">
    <citation type="journal article" date="2006" name="Proc. Natl. Acad. Sci. U.S.A.">
        <title>The complete genome of Rhodococcus sp. RHA1 provides insights into a catabolic powerhouse.</title>
        <authorList>
            <person name="McLeod M.P."/>
            <person name="Warren R.L."/>
            <person name="Hsiao W.W.L."/>
            <person name="Araki N."/>
            <person name="Myhre M."/>
            <person name="Fernandes C."/>
            <person name="Miyazawa D."/>
            <person name="Wong W."/>
            <person name="Lillquist A.L."/>
            <person name="Wang D."/>
            <person name="Dosanjh M."/>
            <person name="Hara H."/>
            <person name="Petrescu A."/>
            <person name="Morin R.D."/>
            <person name="Yang G."/>
            <person name="Stott J.M."/>
            <person name="Schein J.E."/>
            <person name="Shin H."/>
            <person name="Smailus D."/>
            <person name="Siddiqui A.S."/>
            <person name="Marra M.A."/>
            <person name="Jones S.J.M."/>
            <person name="Holt R."/>
            <person name="Brinkman F.S.L."/>
            <person name="Miyauchi K."/>
            <person name="Fukuda M."/>
            <person name="Davies J.E."/>
            <person name="Mohn W.W."/>
            <person name="Eltis L.D."/>
        </authorList>
    </citation>
    <scope>NUCLEOTIDE SEQUENCE [LARGE SCALE GENOMIC DNA]</scope>
    <source>
        <strain>RHA1</strain>
    </source>
</reference>
<proteinExistence type="inferred from homology"/>
<dbReference type="EC" id="1.2.1.10" evidence="1"/>
<dbReference type="EMBL" id="CP000432">
    <property type="protein sequence ID" value="ABG99131.1"/>
    <property type="molecule type" value="Genomic_DNA"/>
</dbReference>
<dbReference type="RefSeq" id="WP_011599026.1">
    <property type="nucleotide sequence ID" value="NC_008269.1"/>
</dbReference>
<dbReference type="SMR" id="Q0S005"/>
<dbReference type="KEGG" id="rha:RHA1_ro08084"/>
<dbReference type="PATRIC" id="fig|101510.16.peg.7426"/>
<dbReference type="HOGENOM" id="CLU_062208_0_0_11"/>
<dbReference type="OrthoDB" id="9786743at2"/>
<dbReference type="Proteomes" id="UP000008710">
    <property type="component" value="Plasmid pRHL1"/>
</dbReference>
<dbReference type="GO" id="GO:0008774">
    <property type="term" value="F:acetaldehyde dehydrogenase (acetylating) activity"/>
    <property type="evidence" value="ECO:0007669"/>
    <property type="project" value="UniProtKB-UniRule"/>
</dbReference>
<dbReference type="GO" id="GO:0051287">
    <property type="term" value="F:NAD binding"/>
    <property type="evidence" value="ECO:0007669"/>
    <property type="project" value="UniProtKB-UniRule"/>
</dbReference>
<dbReference type="GO" id="GO:0009056">
    <property type="term" value="P:catabolic process"/>
    <property type="evidence" value="ECO:0007669"/>
    <property type="project" value="UniProtKB-KW"/>
</dbReference>
<dbReference type="CDD" id="cd23933">
    <property type="entry name" value="ALDH_C"/>
    <property type="match status" value="1"/>
</dbReference>
<dbReference type="Gene3D" id="3.30.360.10">
    <property type="entry name" value="Dihydrodipicolinate Reductase, domain 2"/>
    <property type="match status" value="1"/>
</dbReference>
<dbReference type="Gene3D" id="3.40.50.720">
    <property type="entry name" value="NAD(P)-binding Rossmann-like Domain"/>
    <property type="match status" value="1"/>
</dbReference>
<dbReference type="HAMAP" id="MF_01657">
    <property type="entry name" value="Ac_ald_DH_ac"/>
    <property type="match status" value="1"/>
</dbReference>
<dbReference type="InterPro" id="IPR003361">
    <property type="entry name" value="Acetaldehyde_dehydrogenase"/>
</dbReference>
<dbReference type="InterPro" id="IPR015426">
    <property type="entry name" value="Acetylaldehyde_DH_C"/>
</dbReference>
<dbReference type="InterPro" id="IPR036291">
    <property type="entry name" value="NAD(P)-bd_dom_sf"/>
</dbReference>
<dbReference type="InterPro" id="IPR000534">
    <property type="entry name" value="Semialdehyde_DH_NAD-bd"/>
</dbReference>
<dbReference type="NCBIfam" id="TIGR03215">
    <property type="entry name" value="ac_ald_DH_ac"/>
    <property type="match status" value="1"/>
</dbReference>
<dbReference type="NCBIfam" id="NF006157">
    <property type="entry name" value="PRK08300.1"/>
    <property type="match status" value="1"/>
</dbReference>
<dbReference type="Pfam" id="PF09290">
    <property type="entry name" value="AcetDehyd-dimer"/>
    <property type="match status" value="1"/>
</dbReference>
<dbReference type="Pfam" id="PF01118">
    <property type="entry name" value="Semialdhyde_dh"/>
    <property type="match status" value="1"/>
</dbReference>
<dbReference type="PIRSF" id="PIRSF015689">
    <property type="entry name" value="Actaldh_dh_actl"/>
    <property type="match status" value="1"/>
</dbReference>
<dbReference type="SMART" id="SM00859">
    <property type="entry name" value="Semialdhyde_dh"/>
    <property type="match status" value="1"/>
</dbReference>
<dbReference type="SUPFAM" id="SSF55347">
    <property type="entry name" value="Glyceraldehyde-3-phosphate dehydrogenase-like, C-terminal domain"/>
    <property type="match status" value="1"/>
</dbReference>
<dbReference type="SUPFAM" id="SSF51735">
    <property type="entry name" value="NAD(P)-binding Rossmann-fold domains"/>
    <property type="match status" value="1"/>
</dbReference>
<keyword id="KW-0058">Aromatic hydrocarbons catabolism</keyword>
<keyword id="KW-0520">NAD</keyword>
<keyword id="KW-0560">Oxidoreductase</keyword>
<keyword id="KW-0614">Plasmid</keyword>
<sequence>MSENTRKVTVAVIGSGNIGTDLMIKVIRHSEVLQMGAMVGIDPDSDGLARARRLGVPTTSDGVQGLLQLPNFDEIDVIFDATSAKAHEANAALLEPLGKRLIDLTPAALGPFVVPAVNLDEHRDAANVNMVTCGGQATIPIVAAVSRVTPVAYAEIVASIASKSAGPGTRANIDEFTETTSHAIETVGGARRGKAIIILNPADPPLIMRDTVLCLISAPDPATHDAIRDSIQTMVDHVATYVPGYRLKQQVQITPVPDGQPVRTLLASGDAATPTHQVSVFLEVEGAAHYLPAYAGNLDIMTSAAVRYAESVADTIAAPTAAQGATR</sequence>
<protein>
    <recommendedName>
        <fullName evidence="1">Acetaldehyde dehydrogenase 5</fullName>
        <ecNumber evidence="1">1.2.1.10</ecNumber>
    </recommendedName>
    <alternativeName>
        <fullName evidence="1">Acetaldehyde dehydrogenase [acetylating] 5</fullName>
    </alternativeName>
</protein>
<geneLocation type="plasmid">
    <name>pRHL1</name>
</geneLocation>
<accession>Q0S005</accession>
<gene>
    <name type="ordered locus">RHA1_ro08084</name>
</gene>